<sequence length="182" mass="20731">MQFNIPTLLTLFRVILIPFFVVVFYLPFAWAPMVSALIFCIAAITDWFDGFLARRWNQSTRFGAFLDPVADKVLVAIAMVLVTEHYHSWWVTLPAATMIAREIIISALREWMAELGKRSSVAVSWIGKVKTTAQMVALAWLLWRPNIWVEYAGIALFFVAAVLTLWSMLQYLSAARGDLLDQ</sequence>
<organism>
    <name type="scientific">Salmonella typhi</name>
    <dbReference type="NCBI Taxonomy" id="90370"/>
    <lineage>
        <taxon>Bacteria</taxon>
        <taxon>Pseudomonadati</taxon>
        <taxon>Pseudomonadota</taxon>
        <taxon>Gammaproteobacteria</taxon>
        <taxon>Enterobacterales</taxon>
        <taxon>Enterobacteriaceae</taxon>
        <taxon>Salmonella</taxon>
    </lineage>
</organism>
<evidence type="ECO:0000250" key="1"/>
<evidence type="ECO:0000255" key="2">
    <source>
        <dbReference type="HAMAP-Rule" id="MF_01437"/>
    </source>
</evidence>
<proteinExistence type="inferred from homology"/>
<reference key="1">
    <citation type="journal article" date="2003" name="J. Bacteriol.">
        <title>Comparative genomics of Salmonella enterica serovar Typhi strains Ty2 and CT18.</title>
        <authorList>
            <person name="Deng W."/>
            <person name="Liou S.-R."/>
            <person name="Plunkett G. III"/>
            <person name="Mayhew G.F."/>
            <person name="Rose D.J."/>
            <person name="Burland V."/>
            <person name="Kodoyianni V."/>
            <person name="Schwartz D.C."/>
            <person name="Blattner F.R."/>
        </authorList>
    </citation>
    <scope>NUCLEOTIDE SEQUENCE [LARGE SCALE GENOMIC DNA]</scope>
    <source>
        <strain>ATCC 700931 / Ty2</strain>
    </source>
</reference>
<reference key="2">
    <citation type="journal article" date="2001" name="Nature">
        <title>Complete genome sequence of a multiple drug resistant Salmonella enterica serovar Typhi CT18.</title>
        <authorList>
            <person name="Parkhill J."/>
            <person name="Dougan G."/>
            <person name="James K.D."/>
            <person name="Thomson N.R."/>
            <person name="Pickard D."/>
            <person name="Wain J."/>
            <person name="Churcher C.M."/>
            <person name="Mungall K.L."/>
            <person name="Bentley S.D."/>
            <person name="Holden M.T.G."/>
            <person name="Sebaihia M."/>
            <person name="Baker S."/>
            <person name="Basham D."/>
            <person name="Brooks K."/>
            <person name="Chillingworth T."/>
            <person name="Connerton P."/>
            <person name="Cronin A."/>
            <person name="Davis P."/>
            <person name="Davies R.M."/>
            <person name="Dowd L."/>
            <person name="White N."/>
            <person name="Farrar J."/>
            <person name="Feltwell T."/>
            <person name="Hamlin N."/>
            <person name="Haque A."/>
            <person name="Hien T.T."/>
            <person name="Holroyd S."/>
            <person name="Jagels K."/>
            <person name="Krogh A."/>
            <person name="Larsen T.S."/>
            <person name="Leather S."/>
            <person name="Moule S."/>
            <person name="O'Gaora P."/>
            <person name="Parry C."/>
            <person name="Quail M.A."/>
            <person name="Rutherford K.M."/>
            <person name="Simmonds M."/>
            <person name="Skelton J."/>
            <person name="Stevens K."/>
            <person name="Whitehead S."/>
            <person name="Barrell B.G."/>
        </authorList>
    </citation>
    <scope>NUCLEOTIDE SEQUENCE [LARGE SCALE GENOMIC DNA]</scope>
    <source>
        <strain>CT18</strain>
    </source>
</reference>
<accession>Q8XFD0</accession>
<accession>Q7AMS5</accession>
<gene>
    <name evidence="2" type="primary">pgsA</name>
    <name type="ordered locus">STY2153</name>
    <name type="ordered locus">t0931</name>
</gene>
<keyword id="KW-0997">Cell inner membrane</keyword>
<keyword id="KW-1003">Cell membrane</keyword>
<keyword id="KW-0444">Lipid biosynthesis</keyword>
<keyword id="KW-0443">Lipid metabolism</keyword>
<keyword id="KW-0472">Membrane</keyword>
<keyword id="KW-0594">Phospholipid biosynthesis</keyword>
<keyword id="KW-1208">Phospholipid metabolism</keyword>
<keyword id="KW-0808">Transferase</keyword>
<keyword id="KW-0812">Transmembrane</keyword>
<keyword id="KW-1133">Transmembrane helix</keyword>
<dbReference type="EC" id="2.7.8.5" evidence="2"/>
<dbReference type="EMBL" id="AE014613">
    <property type="protein sequence ID" value="AAO68608.1"/>
    <property type="molecule type" value="Genomic_DNA"/>
</dbReference>
<dbReference type="EMBL" id="AL513382">
    <property type="protein sequence ID" value="CAD05694.1"/>
    <property type="molecule type" value="Genomic_DNA"/>
</dbReference>
<dbReference type="RefSeq" id="NP_456508.1">
    <property type="nucleotide sequence ID" value="NC_003198.1"/>
</dbReference>
<dbReference type="RefSeq" id="WP_001160192.1">
    <property type="nucleotide sequence ID" value="NZ_WSUR01000004.1"/>
</dbReference>
<dbReference type="SMR" id="Q8XFD0"/>
<dbReference type="STRING" id="220341.gene:17586062"/>
<dbReference type="KEGG" id="stt:t0931"/>
<dbReference type="KEGG" id="sty:STY2153"/>
<dbReference type="PATRIC" id="fig|220341.7.peg.2165"/>
<dbReference type="eggNOG" id="COG0558">
    <property type="taxonomic scope" value="Bacteria"/>
</dbReference>
<dbReference type="HOGENOM" id="CLU_051314_2_1_6"/>
<dbReference type="OMA" id="WSMVYYL"/>
<dbReference type="OrthoDB" id="9796672at2"/>
<dbReference type="UniPathway" id="UPA00084">
    <property type="reaction ID" value="UER00503"/>
</dbReference>
<dbReference type="Proteomes" id="UP000000541">
    <property type="component" value="Chromosome"/>
</dbReference>
<dbReference type="Proteomes" id="UP000002670">
    <property type="component" value="Chromosome"/>
</dbReference>
<dbReference type="GO" id="GO:0005886">
    <property type="term" value="C:plasma membrane"/>
    <property type="evidence" value="ECO:0007669"/>
    <property type="project" value="UniProtKB-SubCell"/>
</dbReference>
<dbReference type="GO" id="GO:0008444">
    <property type="term" value="F:CDP-diacylglycerol-glycerol-3-phosphate 3-phosphatidyltransferase activity"/>
    <property type="evidence" value="ECO:0007669"/>
    <property type="project" value="UniProtKB-UniRule"/>
</dbReference>
<dbReference type="GO" id="GO:0006655">
    <property type="term" value="P:phosphatidylglycerol biosynthetic process"/>
    <property type="evidence" value="ECO:0007669"/>
    <property type="project" value="UniProtKB-UniRule"/>
</dbReference>
<dbReference type="FunFam" id="1.20.120.1760:FF:000001">
    <property type="entry name" value="CDP-diacylglycerol--glycerol-3-phosphate 3-phosphatidyltransferase"/>
    <property type="match status" value="1"/>
</dbReference>
<dbReference type="Gene3D" id="1.20.120.1760">
    <property type="match status" value="1"/>
</dbReference>
<dbReference type="HAMAP" id="MF_01437">
    <property type="entry name" value="PgsA"/>
    <property type="match status" value="1"/>
</dbReference>
<dbReference type="InterPro" id="IPR050324">
    <property type="entry name" value="CDP-alcohol_PTase-I"/>
</dbReference>
<dbReference type="InterPro" id="IPR000462">
    <property type="entry name" value="CDP-OH_P_trans"/>
</dbReference>
<dbReference type="InterPro" id="IPR043130">
    <property type="entry name" value="CDP-OH_PTrfase_TM_dom"/>
</dbReference>
<dbReference type="InterPro" id="IPR048254">
    <property type="entry name" value="CDP_ALCOHOL_P_TRANSF_CS"/>
</dbReference>
<dbReference type="InterPro" id="IPR023762">
    <property type="entry name" value="PGP_synthase_bac"/>
</dbReference>
<dbReference type="InterPro" id="IPR004570">
    <property type="entry name" value="Phosphatidylglycerol_P_synth"/>
</dbReference>
<dbReference type="NCBIfam" id="TIGR00560">
    <property type="entry name" value="pgsA"/>
    <property type="match status" value="1"/>
</dbReference>
<dbReference type="NCBIfam" id="NF008090">
    <property type="entry name" value="PRK10832.1"/>
    <property type="match status" value="1"/>
</dbReference>
<dbReference type="PANTHER" id="PTHR14269:SF62">
    <property type="entry name" value="CDP-DIACYLGLYCEROL--GLYCEROL-3-PHOSPHATE 3-PHOSPHATIDYLTRANSFERASE 1, CHLOROPLASTIC"/>
    <property type="match status" value="1"/>
</dbReference>
<dbReference type="PANTHER" id="PTHR14269">
    <property type="entry name" value="CDP-DIACYLGLYCEROL--GLYCEROL-3-PHOSPHATE 3-PHOSPHATIDYLTRANSFERASE-RELATED"/>
    <property type="match status" value="1"/>
</dbReference>
<dbReference type="Pfam" id="PF01066">
    <property type="entry name" value="CDP-OH_P_transf"/>
    <property type="match status" value="1"/>
</dbReference>
<dbReference type="PIRSF" id="PIRSF000847">
    <property type="entry name" value="Phos_ph_gly_syn"/>
    <property type="match status" value="1"/>
</dbReference>
<dbReference type="PROSITE" id="PS00379">
    <property type="entry name" value="CDP_ALCOHOL_P_TRANSF"/>
    <property type="match status" value="1"/>
</dbReference>
<protein>
    <recommendedName>
        <fullName evidence="2">CDP-diacylglycerol--glycerol-3-phosphate 3-phosphatidyltransferase</fullName>
        <ecNumber evidence="2">2.7.8.5</ecNumber>
    </recommendedName>
    <alternativeName>
        <fullName evidence="2">Phosphatidylglycerophosphate synthase</fullName>
        <shortName evidence="2">PGP synthase</shortName>
    </alternativeName>
</protein>
<comment type="function">
    <text evidence="2">Catalyzes the conversion of cytidine diphosphate diacylglycerol (CDP-DG) and glycerol 3-phosphate into phosphatidylglycerol. Essential for the synthesis of anionic phospholipids, thereby playing a role in balancing the ratio of zwitterionic and anionic phospholipids, which is thought to be important for normal membrane function.</text>
</comment>
<comment type="catalytic activity">
    <reaction evidence="2">
        <text>a CDP-1,2-diacyl-sn-glycerol + sn-glycerol 3-phosphate = a 1,2-diacyl-sn-glycero-3-phospho-(1'-sn-glycero-3'-phosphate) + CMP + H(+)</text>
        <dbReference type="Rhea" id="RHEA:12593"/>
        <dbReference type="ChEBI" id="CHEBI:15378"/>
        <dbReference type="ChEBI" id="CHEBI:57597"/>
        <dbReference type="ChEBI" id="CHEBI:58332"/>
        <dbReference type="ChEBI" id="CHEBI:60110"/>
        <dbReference type="ChEBI" id="CHEBI:60377"/>
        <dbReference type="EC" id="2.7.8.5"/>
    </reaction>
</comment>
<comment type="pathway">
    <text evidence="2">Phospholipid metabolism; phosphatidylglycerol biosynthesis; phosphatidylglycerol from CDP-diacylglycerol: step 1/2.</text>
</comment>
<comment type="subcellular location">
    <subcellularLocation>
        <location evidence="2">Cell inner membrane</location>
        <topology evidence="2">Multi-pass membrane protein</topology>
    </subcellularLocation>
</comment>
<comment type="similarity">
    <text evidence="2">Belongs to the CDP-alcohol phosphatidyltransferase class-I family.</text>
</comment>
<name>PGSA_SALTI</name>
<feature type="initiator methionine" description="Removed" evidence="1">
    <location>
        <position position="1"/>
    </location>
</feature>
<feature type="chain" id="PRO_0000239127" description="CDP-diacylglycerol--glycerol-3-phosphate 3-phosphatidyltransferase">
    <location>
        <begin position="2"/>
        <end position="182"/>
    </location>
</feature>
<feature type="topological domain" description="Cytoplasmic" evidence="2">
    <location>
        <begin position="2"/>
        <end position="12"/>
    </location>
</feature>
<feature type="transmembrane region" description="Helical" evidence="2">
    <location>
        <begin position="13"/>
        <end position="37"/>
    </location>
</feature>
<feature type="topological domain" description="Periplasmic" evidence="2">
    <location>
        <begin position="38"/>
        <end position="60"/>
    </location>
</feature>
<feature type="transmembrane region" description="Helical" evidence="2">
    <location>
        <begin position="61"/>
        <end position="81"/>
    </location>
</feature>
<feature type="topological domain" description="Cytoplasmic" evidence="2">
    <location>
        <begin position="82"/>
        <end position="86"/>
    </location>
</feature>
<feature type="transmembrane region" description="Helical" evidence="2">
    <location>
        <begin position="87"/>
        <end position="107"/>
    </location>
</feature>
<feature type="topological domain" description="Periplasmic" evidence="2">
    <location>
        <begin position="108"/>
        <end position="145"/>
    </location>
</feature>
<feature type="transmembrane region" description="Helical" evidence="2">
    <location>
        <begin position="146"/>
        <end position="168"/>
    </location>
</feature>
<feature type="topological domain" description="Cytoplasmic" evidence="2">
    <location>
        <begin position="169"/>
        <end position="181"/>
    </location>
</feature>